<comment type="function">
    <text evidence="1">One of the early assembly proteins it binds 23S rRNA. One of the proteins that surrounds the polypeptide exit tunnel on the outside of the ribosome. Forms the main docking site for trigger factor binding to the ribosome.</text>
</comment>
<comment type="subunit">
    <text evidence="1">Part of the 50S ribosomal subunit. Contacts protein L29, and trigger factor when it is bound to the ribosome.</text>
</comment>
<comment type="similarity">
    <text evidence="1">Belongs to the universal ribosomal protein uL23 family.</text>
</comment>
<reference key="1">
    <citation type="journal article" date="2006" name="Proc. Natl. Acad. Sci. U.S.A.">
        <title>Burkholderia xenovorans LB400 harbors a multi-replicon, 9.73-Mbp genome shaped for versatility.</title>
        <authorList>
            <person name="Chain P.S.G."/>
            <person name="Denef V.J."/>
            <person name="Konstantinidis K.T."/>
            <person name="Vergez L.M."/>
            <person name="Agullo L."/>
            <person name="Reyes V.L."/>
            <person name="Hauser L."/>
            <person name="Cordova M."/>
            <person name="Gomez L."/>
            <person name="Gonzalez M."/>
            <person name="Land M."/>
            <person name="Lao V."/>
            <person name="Larimer F."/>
            <person name="LiPuma J.J."/>
            <person name="Mahenthiralingam E."/>
            <person name="Malfatti S.A."/>
            <person name="Marx C.J."/>
            <person name="Parnell J.J."/>
            <person name="Ramette A."/>
            <person name="Richardson P."/>
            <person name="Seeger M."/>
            <person name="Smith D."/>
            <person name="Spilker T."/>
            <person name="Sul W.J."/>
            <person name="Tsoi T.V."/>
            <person name="Ulrich L.E."/>
            <person name="Zhulin I.B."/>
            <person name="Tiedje J.M."/>
        </authorList>
    </citation>
    <scope>NUCLEOTIDE SEQUENCE [LARGE SCALE GENOMIC DNA]</scope>
    <source>
        <strain>LB400</strain>
    </source>
</reference>
<proteinExistence type="inferred from homology"/>
<protein>
    <recommendedName>
        <fullName evidence="1">Large ribosomal subunit protein uL23</fullName>
    </recommendedName>
    <alternativeName>
        <fullName evidence="2">50S ribosomal protein L23</fullName>
    </alternativeName>
</protein>
<evidence type="ECO:0000255" key="1">
    <source>
        <dbReference type="HAMAP-Rule" id="MF_01369"/>
    </source>
</evidence>
<evidence type="ECO:0000305" key="2"/>
<accession>Q13TH2</accession>
<dbReference type="EMBL" id="CP000270">
    <property type="protein sequence ID" value="ABE32617.1"/>
    <property type="molecule type" value="Genomic_DNA"/>
</dbReference>
<dbReference type="RefSeq" id="WP_007180135.1">
    <property type="nucleotide sequence ID" value="NZ_CP008760.1"/>
</dbReference>
<dbReference type="SMR" id="Q13TH2"/>
<dbReference type="STRING" id="266265.Bxe_A0316"/>
<dbReference type="GeneID" id="97310994"/>
<dbReference type="KEGG" id="bxb:DR64_2486"/>
<dbReference type="KEGG" id="bxe:Bxe_A0316"/>
<dbReference type="eggNOG" id="COG0089">
    <property type="taxonomic scope" value="Bacteria"/>
</dbReference>
<dbReference type="OrthoDB" id="9793353at2"/>
<dbReference type="Proteomes" id="UP000001817">
    <property type="component" value="Chromosome 1"/>
</dbReference>
<dbReference type="GO" id="GO:1990904">
    <property type="term" value="C:ribonucleoprotein complex"/>
    <property type="evidence" value="ECO:0007669"/>
    <property type="project" value="UniProtKB-KW"/>
</dbReference>
<dbReference type="GO" id="GO:0005840">
    <property type="term" value="C:ribosome"/>
    <property type="evidence" value="ECO:0007669"/>
    <property type="project" value="UniProtKB-KW"/>
</dbReference>
<dbReference type="GO" id="GO:0019843">
    <property type="term" value="F:rRNA binding"/>
    <property type="evidence" value="ECO:0007669"/>
    <property type="project" value="UniProtKB-UniRule"/>
</dbReference>
<dbReference type="GO" id="GO:0003735">
    <property type="term" value="F:structural constituent of ribosome"/>
    <property type="evidence" value="ECO:0007669"/>
    <property type="project" value="InterPro"/>
</dbReference>
<dbReference type="GO" id="GO:0006412">
    <property type="term" value="P:translation"/>
    <property type="evidence" value="ECO:0007669"/>
    <property type="project" value="UniProtKB-UniRule"/>
</dbReference>
<dbReference type="FunFam" id="3.30.70.330:FF:000001">
    <property type="entry name" value="50S ribosomal protein L23"/>
    <property type="match status" value="1"/>
</dbReference>
<dbReference type="Gene3D" id="3.30.70.330">
    <property type="match status" value="1"/>
</dbReference>
<dbReference type="HAMAP" id="MF_01369_B">
    <property type="entry name" value="Ribosomal_uL23_B"/>
    <property type="match status" value="1"/>
</dbReference>
<dbReference type="InterPro" id="IPR012677">
    <property type="entry name" value="Nucleotide-bd_a/b_plait_sf"/>
</dbReference>
<dbReference type="InterPro" id="IPR013025">
    <property type="entry name" value="Ribosomal_uL23-like"/>
</dbReference>
<dbReference type="InterPro" id="IPR012678">
    <property type="entry name" value="Ribosomal_uL23/eL15/eS24_sf"/>
</dbReference>
<dbReference type="NCBIfam" id="NF004359">
    <property type="entry name" value="PRK05738.1-3"/>
    <property type="match status" value="1"/>
</dbReference>
<dbReference type="NCBIfam" id="NF004363">
    <property type="entry name" value="PRK05738.2-4"/>
    <property type="match status" value="1"/>
</dbReference>
<dbReference type="PANTHER" id="PTHR11620">
    <property type="entry name" value="60S RIBOSOMAL PROTEIN L23A"/>
    <property type="match status" value="1"/>
</dbReference>
<dbReference type="Pfam" id="PF00276">
    <property type="entry name" value="Ribosomal_L23"/>
    <property type="match status" value="1"/>
</dbReference>
<dbReference type="SUPFAM" id="SSF54189">
    <property type="entry name" value="Ribosomal proteins S24e, L23 and L15e"/>
    <property type="match status" value="1"/>
</dbReference>
<keyword id="KW-1185">Reference proteome</keyword>
<keyword id="KW-0687">Ribonucleoprotein</keyword>
<keyword id="KW-0689">Ribosomal protein</keyword>
<keyword id="KW-0694">RNA-binding</keyword>
<keyword id="KW-0699">rRNA-binding</keyword>
<organism>
    <name type="scientific">Paraburkholderia xenovorans (strain LB400)</name>
    <dbReference type="NCBI Taxonomy" id="266265"/>
    <lineage>
        <taxon>Bacteria</taxon>
        <taxon>Pseudomonadati</taxon>
        <taxon>Pseudomonadota</taxon>
        <taxon>Betaproteobacteria</taxon>
        <taxon>Burkholderiales</taxon>
        <taxon>Burkholderiaceae</taxon>
        <taxon>Paraburkholderia</taxon>
    </lineage>
</organism>
<sequence length="104" mass="11673">MSEIRKNDHRLMQVLLAPVISEKATLVADKNEQVVFEVAPDATKQEVKAAVELLFKVEVNSVNVLVSKGKAKRFGRFMGKRKDVKKAYVCLKPGQEINFEAEAK</sequence>
<gene>
    <name evidence="1" type="primary">rplW</name>
    <name type="ordered locus">Bxeno_A4079</name>
    <name type="ORF">Bxe_A0316</name>
</gene>
<feature type="chain" id="PRO_0000272726" description="Large ribosomal subunit protein uL23">
    <location>
        <begin position="1"/>
        <end position="104"/>
    </location>
</feature>
<name>RL23_PARXL</name>